<keyword id="KW-0143">Chaperone</keyword>
<keyword id="KW-1029">Fimbrium biogenesis</keyword>
<keyword id="KW-0393">Immunoglobulin domain</keyword>
<keyword id="KW-0574">Periplasm</keyword>
<keyword id="KW-0732">Signal</keyword>
<protein>
    <recommendedName>
        <fullName>Chaperone protein HifB</fullName>
    </recommendedName>
</protein>
<evidence type="ECO:0000255" key="1"/>
<evidence type="ECO:0000305" key="2"/>
<gene>
    <name type="primary">hifB</name>
</gene>
<dbReference type="EMBL" id="X66606">
    <property type="protein sequence ID" value="CAA47175.1"/>
    <property type="molecule type" value="Genomic_DNA"/>
</dbReference>
<dbReference type="EMBL" id="Z33502">
    <property type="protein sequence ID" value="CAA83901.1"/>
    <property type="molecule type" value="Genomic_DNA"/>
</dbReference>
<dbReference type="PIR" id="S24978">
    <property type="entry name" value="S24978"/>
</dbReference>
<dbReference type="PIR" id="S54428">
    <property type="entry name" value="S54428"/>
</dbReference>
<dbReference type="SMR" id="P35757"/>
<dbReference type="GO" id="GO:0030288">
    <property type="term" value="C:outer membrane-bounded periplasmic space"/>
    <property type="evidence" value="ECO:0007669"/>
    <property type="project" value="InterPro"/>
</dbReference>
<dbReference type="GO" id="GO:0071555">
    <property type="term" value="P:cell wall organization"/>
    <property type="evidence" value="ECO:0007669"/>
    <property type="project" value="InterPro"/>
</dbReference>
<dbReference type="GO" id="GO:0061077">
    <property type="term" value="P:chaperone-mediated protein folding"/>
    <property type="evidence" value="ECO:0007669"/>
    <property type="project" value="InterPro"/>
</dbReference>
<dbReference type="FunFam" id="2.60.40.10:FF:000458">
    <property type="entry name" value="Molecular chaperone FimC"/>
    <property type="match status" value="1"/>
</dbReference>
<dbReference type="Gene3D" id="2.60.40.10">
    <property type="entry name" value="Immunoglobulins"/>
    <property type="match status" value="2"/>
</dbReference>
<dbReference type="InterPro" id="IPR013783">
    <property type="entry name" value="Ig-like_fold"/>
</dbReference>
<dbReference type="InterPro" id="IPR008962">
    <property type="entry name" value="PapD-like_sf"/>
</dbReference>
<dbReference type="InterPro" id="IPR050643">
    <property type="entry name" value="Periplasmic_pilus_chap"/>
</dbReference>
<dbReference type="InterPro" id="IPR036316">
    <property type="entry name" value="Pili_assmbl_chap_C_dom_sf"/>
</dbReference>
<dbReference type="InterPro" id="IPR001829">
    <property type="entry name" value="Pili_assmbl_chaperone_bac"/>
</dbReference>
<dbReference type="InterPro" id="IPR016148">
    <property type="entry name" value="Pili_assmbl_chaperone_C"/>
</dbReference>
<dbReference type="InterPro" id="IPR018046">
    <property type="entry name" value="Pili_assmbl_chaperone_CS"/>
</dbReference>
<dbReference type="InterPro" id="IPR016147">
    <property type="entry name" value="Pili_assmbl_chaperone_N"/>
</dbReference>
<dbReference type="PANTHER" id="PTHR30251:SF2">
    <property type="entry name" value="FIMBRIAL CHAPERONE YADV-RELATED"/>
    <property type="match status" value="1"/>
</dbReference>
<dbReference type="PANTHER" id="PTHR30251">
    <property type="entry name" value="PILUS ASSEMBLY CHAPERONE"/>
    <property type="match status" value="1"/>
</dbReference>
<dbReference type="Pfam" id="PF02753">
    <property type="entry name" value="PapD_C"/>
    <property type="match status" value="1"/>
</dbReference>
<dbReference type="Pfam" id="PF00345">
    <property type="entry name" value="PapD_N"/>
    <property type="match status" value="1"/>
</dbReference>
<dbReference type="PRINTS" id="PR00969">
    <property type="entry name" value="CHAPERONPILI"/>
</dbReference>
<dbReference type="SUPFAM" id="SSF49354">
    <property type="entry name" value="PapD-like"/>
    <property type="match status" value="1"/>
</dbReference>
<dbReference type="SUPFAM" id="SSF49584">
    <property type="entry name" value="Periplasmic chaperone C-domain"/>
    <property type="match status" value="1"/>
</dbReference>
<dbReference type="PROSITE" id="PS00635">
    <property type="entry name" value="PILI_CHAPERONE"/>
    <property type="match status" value="1"/>
</dbReference>
<comment type="function">
    <text>Mediates assembly of pili by forming soluble multimeric complexes with pili subunits as an intermediate step in the assembly process. This protein is involved in type B pili (HifA) assembly.</text>
</comment>
<comment type="subcellular location">
    <subcellularLocation>
        <location>Periplasm</location>
    </subcellularLocation>
</comment>
<comment type="similarity">
    <text evidence="2">Belongs to the periplasmic pilus chaperone family.</text>
</comment>
<name>HIFB1_HAEIF</name>
<organism>
    <name type="scientific">Haemophilus influenzae</name>
    <dbReference type="NCBI Taxonomy" id="727"/>
    <lineage>
        <taxon>Bacteria</taxon>
        <taxon>Pseudomonadati</taxon>
        <taxon>Pseudomonadota</taxon>
        <taxon>Gammaproteobacteria</taxon>
        <taxon>Pasteurellales</taxon>
        <taxon>Pasteurellaceae</taxon>
        <taxon>Haemophilus</taxon>
    </lineage>
</organism>
<reference key="1">
    <citation type="submission" date="1992-06" db="EMBL/GenBank/DDBJ databases">
        <authorList>
            <person name="Smith A.L."/>
            <person name="Forney L.J."/>
            <person name="Chanyangam M."/>
        </authorList>
    </citation>
    <scope>NUCLEOTIDE SEQUENCE [GENOMIC DNA]</scope>
    <source>
        <strain>Isolate R1369 / Serotype B</strain>
    </source>
</reference>
<reference key="2">
    <citation type="journal article" date="1994" name="Mol. Microbiol.">
        <title>The fimbrial gene cluster of Haemophilus influenzae type b.</title>
        <authorList>
            <person name="van Ham M.S."/>
            <person name="van Alphen L."/>
            <person name="Mooi F.R."/>
            <person name="van Putten J.P.M."/>
        </authorList>
    </citation>
    <scope>NUCLEOTIDE SEQUENCE [GENOMIC DNA]</scope>
    <source>
        <strain>AM30 (770235) / Serotype B</strain>
    </source>
</reference>
<proteinExistence type="inferred from homology"/>
<accession>P35757</accession>
<sequence>MGKTMFKKTLLFFTALFFTALCAFSANANVIITGTRVIYPAGQKNVIVKLENNDDSAALVQAWIDNGNPNADPKYTKTPFVITPPVARVEAKSGQSLRITFTGGEPLPDDRESLFYFNLLDIPPKPDAEFLAKHGSFMQIAIRSRLKLFYRPAKLSLDPFDAMKKVVFKATPKGVLVDNQTPYYMNYIGLLHQNKPAKNVKMVAPFSQAVFEAKGVRSGDKLKWVLVNDYGADQEGDAIAQ</sequence>
<feature type="signal peptide" evidence="1">
    <location>
        <begin position="1"/>
        <end position="27"/>
    </location>
</feature>
<feature type="chain" id="PRO_0000009279" description="Chaperone protein HifB">
    <location>
        <begin position="28"/>
        <end position="241"/>
    </location>
</feature>
<feature type="sequence variant" description="In strain: AM30.">
    <location>
        <begin position="17"/>
        <end position="21"/>
    </location>
</feature>
<feature type="sequence variant" description="In strain: AM30.">
    <original>G</original>
    <variation>S</variation>
    <location>
        <position position="104"/>
    </location>
</feature>